<keyword id="KW-0535">Nitrogen fixation</keyword>
<keyword id="KW-0804">Transcription</keyword>
<keyword id="KW-0805">Transcription regulation</keyword>
<proteinExistence type="inferred from homology"/>
<gene>
    <name type="primary">glnBB</name>
</gene>
<comment type="function">
    <text>Could be involved in the regulation of nitrogen fixation.</text>
</comment>
<comment type="similarity">
    <text evidence="1">Belongs to the P(II) protein family.</text>
</comment>
<dbReference type="EMBL" id="X56072">
    <property type="protein sequence ID" value="CAA39554.1"/>
    <property type="molecule type" value="Genomic_DNA"/>
</dbReference>
<dbReference type="SMR" id="P54809"/>
<dbReference type="GO" id="GO:0005829">
    <property type="term" value="C:cytosol"/>
    <property type="evidence" value="ECO:0007669"/>
    <property type="project" value="TreeGrafter"/>
</dbReference>
<dbReference type="GO" id="GO:0005524">
    <property type="term" value="F:ATP binding"/>
    <property type="evidence" value="ECO:0007669"/>
    <property type="project" value="TreeGrafter"/>
</dbReference>
<dbReference type="GO" id="GO:0030234">
    <property type="term" value="F:enzyme regulator activity"/>
    <property type="evidence" value="ECO:0007669"/>
    <property type="project" value="InterPro"/>
</dbReference>
<dbReference type="GO" id="GO:0009399">
    <property type="term" value="P:nitrogen fixation"/>
    <property type="evidence" value="ECO:0007669"/>
    <property type="project" value="UniProtKB-KW"/>
</dbReference>
<dbReference type="GO" id="GO:0006808">
    <property type="term" value="P:regulation of nitrogen utilization"/>
    <property type="evidence" value="ECO:0007669"/>
    <property type="project" value="InterPro"/>
</dbReference>
<dbReference type="Gene3D" id="3.30.70.120">
    <property type="match status" value="1"/>
</dbReference>
<dbReference type="InterPro" id="IPR002187">
    <property type="entry name" value="N-reg_PII"/>
</dbReference>
<dbReference type="InterPro" id="IPR011322">
    <property type="entry name" value="N-reg_PII-like_a/b"/>
</dbReference>
<dbReference type="InterPro" id="IPR015867">
    <property type="entry name" value="N-reg_PII/ATP_PRibTrfase_C"/>
</dbReference>
<dbReference type="InterPro" id="IPR017918">
    <property type="entry name" value="N-reg_PII_CS"/>
</dbReference>
<dbReference type="PANTHER" id="PTHR30115">
    <property type="entry name" value="NITROGEN REGULATORY PROTEIN P-II"/>
    <property type="match status" value="1"/>
</dbReference>
<dbReference type="PANTHER" id="PTHR30115:SF11">
    <property type="entry name" value="NITROGEN REGULATORY PROTEIN P-II HOMOLOG"/>
    <property type="match status" value="1"/>
</dbReference>
<dbReference type="Pfam" id="PF00543">
    <property type="entry name" value="P-II"/>
    <property type="match status" value="1"/>
</dbReference>
<dbReference type="PRINTS" id="PR00340">
    <property type="entry name" value="PIIGLNB"/>
</dbReference>
<dbReference type="SMART" id="SM00938">
    <property type="entry name" value="P-II"/>
    <property type="match status" value="1"/>
</dbReference>
<dbReference type="SUPFAM" id="SSF54913">
    <property type="entry name" value="GlnB-like"/>
    <property type="match status" value="1"/>
</dbReference>
<dbReference type="PROSITE" id="PS00638">
    <property type="entry name" value="PII_GLNB_CTER"/>
    <property type="match status" value="1"/>
</dbReference>
<dbReference type="PROSITE" id="PS51343">
    <property type="entry name" value="PII_GLNB_DOM"/>
    <property type="match status" value="1"/>
</dbReference>
<protein>
    <recommendedName>
        <fullName>Nitrogen fixation nifHD1 region GlnB-like protein 2</fullName>
    </recommendedName>
    <alternativeName>
        <fullName>ORF-123</fullName>
    </alternativeName>
</protein>
<accession>P54809</accession>
<organism>
    <name type="scientific">Methanosarcina barkeri</name>
    <dbReference type="NCBI Taxonomy" id="2208"/>
    <lineage>
        <taxon>Archaea</taxon>
        <taxon>Methanobacteriati</taxon>
        <taxon>Methanobacteriota</taxon>
        <taxon>Stenosarchaea group</taxon>
        <taxon>Methanomicrobia</taxon>
        <taxon>Methanosarcinales</taxon>
        <taxon>Methanosarcinaceae</taxon>
        <taxon>Methanosarcina</taxon>
    </lineage>
</organism>
<reference key="1">
    <citation type="journal article" date="1991" name="Res. Microbiol.">
        <title>Nucleotide sequence of nifH regions from Methanobacterium ivanovii and Methanosarcina barkeri 227 and characterization of glnB-like genes.</title>
        <authorList>
            <person name="Sibold L."/>
            <person name="Henriquet M."/>
            <person name="Possot O."/>
            <person name="Aubert J.-P."/>
        </authorList>
    </citation>
    <scope>NUCLEOTIDE SEQUENCE [GENOMIC DNA]</scope>
    <source>
        <strain>ATCC 43241 / DSM 1538 / 227</strain>
    </source>
</reference>
<sequence length="123" mass="13718">MKEVTAVVRPNKMSVTKDALDKIGYRRMTAIPVLGKGKQRGISGELNFYIQPKLLAKRYSTGMKYIPKRLLSIVVNDEDVDQVIKTIIGVNQTAQIGDGKIFVESIDEVIRIRTGEKGELALK</sequence>
<name>GLNB2_METBA</name>
<evidence type="ECO:0000255" key="1">
    <source>
        <dbReference type="PROSITE-ProRule" id="PRU00675"/>
    </source>
</evidence>
<feature type="chain" id="PRO_0000139801" description="Nitrogen fixation nifHD1 region GlnB-like protein 2">
    <location>
        <begin position="1"/>
        <end position="123"/>
    </location>
</feature>